<proteinExistence type="inferred from homology"/>
<comment type="function">
    <text evidence="1">Protein and nucleotide deglycase that catalyzes the deglycation of the Maillard adducts formed between amino groups of proteins or nucleotides and reactive carbonyl groups of glyoxals. Thus, functions as a protein deglycase that repairs methylglyoxal- and glyoxal-glycated proteins, and releases repaired proteins and lactate or glycolate, respectively. Deglycates cysteine, arginine and lysine residues in proteins, and thus reactivates these proteins by reversing glycation by glyoxals. Acts on early glycation intermediates (hemithioacetals and aminocarbinols), preventing the formation of Schiff bases and advanced glycation endproducts (AGE). Also functions as a nucleotide deglycase able to repair glycated guanine in the free nucleotide pool (GTP, GDP, GMP, dGTP) and in DNA and RNA. Is thus involved in a major nucleotide repair system named guanine glycation repair (GG repair), dedicated to reversing methylglyoxal and glyoxal damage via nucleotide sanitization and direct nucleic acid repair. Plays an important role in protecting cells from carbonyl stress.</text>
</comment>
<comment type="catalytic activity">
    <reaction evidence="1">
        <text>N(omega)-(1-hydroxy-2-oxopropyl)-L-arginyl-[protein] + H2O = lactate + L-arginyl-[protein] + H(+)</text>
        <dbReference type="Rhea" id="RHEA:49548"/>
        <dbReference type="Rhea" id="RHEA-COMP:10532"/>
        <dbReference type="Rhea" id="RHEA-COMP:12428"/>
        <dbReference type="ChEBI" id="CHEBI:15377"/>
        <dbReference type="ChEBI" id="CHEBI:15378"/>
        <dbReference type="ChEBI" id="CHEBI:24996"/>
        <dbReference type="ChEBI" id="CHEBI:29965"/>
        <dbReference type="ChEBI" id="CHEBI:131708"/>
        <dbReference type="EC" id="3.5.1.124"/>
    </reaction>
</comment>
<comment type="catalytic activity">
    <reaction evidence="1">
        <text>N(6)-(1-hydroxy-2-oxopropyl)-L-lysyl-[protein] + H2O = lactate + L-lysyl-[protein] + H(+)</text>
        <dbReference type="Rhea" id="RHEA:49552"/>
        <dbReference type="Rhea" id="RHEA-COMP:9752"/>
        <dbReference type="Rhea" id="RHEA-COMP:12429"/>
        <dbReference type="ChEBI" id="CHEBI:15377"/>
        <dbReference type="ChEBI" id="CHEBI:15378"/>
        <dbReference type="ChEBI" id="CHEBI:24996"/>
        <dbReference type="ChEBI" id="CHEBI:29969"/>
        <dbReference type="ChEBI" id="CHEBI:131709"/>
        <dbReference type="EC" id="3.5.1.124"/>
    </reaction>
</comment>
<comment type="catalytic activity">
    <reaction evidence="1">
        <text>S-(1-hydroxy-2-oxopropyl)-L-cysteinyl-[protein] + H2O = lactate + L-cysteinyl-[protein] + H(+)</text>
        <dbReference type="Rhea" id="RHEA:49556"/>
        <dbReference type="Rhea" id="RHEA-COMP:10131"/>
        <dbReference type="Rhea" id="RHEA-COMP:12430"/>
        <dbReference type="ChEBI" id="CHEBI:15377"/>
        <dbReference type="ChEBI" id="CHEBI:15378"/>
        <dbReference type="ChEBI" id="CHEBI:24996"/>
        <dbReference type="ChEBI" id="CHEBI:29950"/>
        <dbReference type="ChEBI" id="CHEBI:131710"/>
        <dbReference type="EC" id="3.5.1.124"/>
    </reaction>
</comment>
<comment type="catalytic activity">
    <reaction evidence="1">
        <text>N(omega)-(1-hydroxy-2-oxoethyl)-L-arginyl-[protein] + H2O = L-arginyl-[protein] + glycolate + H(+)</text>
        <dbReference type="Rhea" id="RHEA:57188"/>
        <dbReference type="Rhea" id="RHEA-COMP:10532"/>
        <dbReference type="Rhea" id="RHEA-COMP:14844"/>
        <dbReference type="ChEBI" id="CHEBI:15377"/>
        <dbReference type="ChEBI" id="CHEBI:15378"/>
        <dbReference type="ChEBI" id="CHEBI:29805"/>
        <dbReference type="ChEBI" id="CHEBI:29965"/>
        <dbReference type="ChEBI" id="CHEBI:141553"/>
        <dbReference type="EC" id="3.5.1.124"/>
    </reaction>
</comment>
<comment type="catalytic activity">
    <reaction evidence="1">
        <text>N(6)-(1-hydroxy-2-oxoethyl)-L-lysyl-[protein] + H2O = glycolate + L-lysyl-[protein] + H(+)</text>
        <dbReference type="Rhea" id="RHEA:57192"/>
        <dbReference type="Rhea" id="RHEA-COMP:9752"/>
        <dbReference type="Rhea" id="RHEA-COMP:14845"/>
        <dbReference type="ChEBI" id="CHEBI:15377"/>
        <dbReference type="ChEBI" id="CHEBI:15378"/>
        <dbReference type="ChEBI" id="CHEBI:29805"/>
        <dbReference type="ChEBI" id="CHEBI:29969"/>
        <dbReference type="ChEBI" id="CHEBI:141554"/>
        <dbReference type="EC" id="3.5.1.124"/>
    </reaction>
</comment>
<comment type="catalytic activity">
    <reaction evidence="1">
        <text>S-(1-hydroxy-2-oxoethyl)-L-cysteinyl-[protein] + H2O = glycolate + L-cysteinyl-[protein] + H(+)</text>
        <dbReference type="Rhea" id="RHEA:57196"/>
        <dbReference type="Rhea" id="RHEA-COMP:10131"/>
        <dbReference type="Rhea" id="RHEA-COMP:14846"/>
        <dbReference type="ChEBI" id="CHEBI:15377"/>
        <dbReference type="ChEBI" id="CHEBI:15378"/>
        <dbReference type="ChEBI" id="CHEBI:29805"/>
        <dbReference type="ChEBI" id="CHEBI:29950"/>
        <dbReference type="ChEBI" id="CHEBI:141555"/>
        <dbReference type="EC" id="3.5.1.124"/>
    </reaction>
</comment>
<comment type="catalytic activity">
    <reaction evidence="1">
        <text>N(2)-(1-hydroxy-2-oxopropyl)-dGTP + H2O = lactate + dGTP + H(+)</text>
        <dbReference type="Rhea" id="RHEA:57244"/>
        <dbReference type="ChEBI" id="CHEBI:15377"/>
        <dbReference type="ChEBI" id="CHEBI:15378"/>
        <dbReference type="ChEBI" id="CHEBI:24996"/>
        <dbReference type="ChEBI" id="CHEBI:61429"/>
        <dbReference type="ChEBI" id="CHEBI:141569"/>
    </reaction>
</comment>
<comment type="catalytic activity">
    <reaction evidence="1">
        <text>N(2)-(1-hydroxy-2-oxopropyl)-GTP + H2O = lactate + GTP + H(+)</text>
        <dbReference type="Rhea" id="RHEA:57256"/>
        <dbReference type="ChEBI" id="CHEBI:15377"/>
        <dbReference type="ChEBI" id="CHEBI:15378"/>
        <dbReference type="ChEBI" id="CHEBI:24996"/>
        <dbReference type="ChEBI" id="CHEBI:37565"/>
        <dbReference type="ChEBI" id="CHEBI:141570"/>
    </reaction>
</comment>
<comment type="catalytic activity">
    <reaction evidence="1">
        <text>N(2)-(1-hydroxy-2-oxopropyl)-GDP + H2O = lactate + GDP + H(+)</text>
        <dbReference type="Rhea" id="RHEA:57260"/>
        <dbReference type="ChEBI" id="CHEBI:15377"/>
        <dbReference type="ChEBI" id="CHEBI:15378"/>
        <dbReference type="ChEBI" id="CHEBI:24996"/>
        <dbReference type="ChEBI" id="CHEBI:58189"/>
        <dbReference type="ChEBI" id="CHEBI:141573"/>
    </reaction>
</comment>
<comment type="catalytic activity">
    <reaction evidence="1">
        <text>N(2)-(1-hydroxy-2-oxopropyl)-GMP + H2O = lactate + GMP + H(+)</text>
        <dbReference type="Rhea" id="RHEA:57268"/>
        <dbReference type="ChEBI" id="CHEBI:15377"/>
        <dbReference type="ChEBI" id="CHEBI:15378"/>
        <dbReference type="ChEBI" id="CHEBI:24996"/>
        <dbReference type="ChEBI" id="CHEBI:58115"/>
        <dbReference type="ChEBI" id="CHEBI:141575"/>
    </reaction>
</comment>
<comment type="catalytic activity">
    <reaction evidence="1">
        <text>N(2)-(1-hydroxy-2-oxoethyl)-dGTP + H2O = dGTP + glycolate + H(+)</text>
        <dbReference type="Rhea" id="RHEA:57248"/>
        <dbReference type="ChEBI" id="CHEBI:15377"/>
        <dbReference type="ChEBI" id="CHEBI:15378"/>
        <dbReference type="ChEBI" id="CHEBI:29805"/>
        <dbReference type="ChEBI" id="CHEBI:61429"/>
        <dbReference type="ChEBI" id="CHEBI:141572"/>
    </reaction>
</comment>
<comment type="catalytic activity">
    <reaction evidence="1">
        <text>N(2)-(1-hydroxy-2-oxoethyl)-GTP + H2O = glycolate + GTP + H(+)</text>
        <dbReference type="Rhea" id="RHEA:57252"/>
        <dbReference type="ChEBI" id="CHEBI:15377"/>
        <dbReference type="ChEBI" id="CHEBI:15378"/>
        <dbReference type="ChEBI" id="CHEBI:29805"/>
        <dbReference type="ChEBI" id="CHEBI:37565"/>
        <dbReference type="ChEBI" id="CHEBI:141571"/>
    </reaction>
</comment>
<comment type="catalytic activity">
    <reaction evidence="1">
        <text>N(2)-(1-hydroxy-2-oxoethyl)-GDP + H2O = glycolate + GDP + H(+)</text>
        <dbReference type="Rhea" id="RHEA:57264"/>
        <dbReference type="ChEBI" id="CHEBI:15377"/>
        <dbReference type="ChEBI" id="CHEBI:15378"/>
        <dbReference type="ChEBI" id="CHEBI:29805"/>
        <dbReference type="ChEBI" id="CHEBI:58189"/>
        <dbReference type="ChEBI" id="CHEBI:141574"/>
    </reaction>
</comment>
<comment type="catalytic activity">
    <reaction evidence="1">
        <text>N(2)-(1-hydroxy-2-oxoethyl)-GMP + H2O = glycolate + GMP + H(+)</text>
        <dbReference type="Rhea" id="RHEA:57304"/>
        <dbReference type="ChEBI" id="CHEBI:15377"/>
        <dbReference type="ChEBI" id="CHEBI:15378"/>
        <dbReference type="ChEBI" id="CHEBI:29805"/>
        <dbReference type="ChEBI" id="CHEBI:58115"/>
        <dbReference type="ChEBI" id="CHEBI:141576"/>
    </reaction>
</comment>
<comment type="catalytic activity">
    <reaction evidence="1">
        <text>an N(2)-(1-hydroxy-2-oxopropyl)-guanosine in RNA + H2O = a guanosine in RNA + lactate + H(+)</text>
        <dbReference type="Rhea" id="RHEA:57288"/>
        <dbReference type="Rhea" id="RHEA-COMP:14855"/>
        <dbReference type="Rhea" id="RHEA-COMP:14858"/>
        <dbReference type="ChEBI" id="CHEBI:15377"/>
        <dbReference type="ChEBI" id="CHEBI:15378"/>
        <dbReference type="ChEBI" id="CHEBI:24996"/>
        <dbReference type="ChEBI" id="CHEBI:74269"/>
        <dbReference type="ChEBI" id="CHEBI:141580"/>
    </reaction>
</comment>
<comment type="catalytic activity">
    <reaction evidence="1">
        <text>an N(2)-(1-hydroxy-2-oxopropyl)-2'-deoxyguanosine in DNA + H2O = a 2'-deoxyguanosine in DNA + lactate + H(+)</text>
        <dbReference type="Rhea" id="RHEA:57300"/>
        <dbReference type="Rhea" id="RHEA-COMP:11367"/>
        <dbReference type="Rhea" id="RHEA-COMP:14856"/>
        <dbReference type="ChEBI" id="CHEBI:15377"/>
        <dbReference type="ChEBI" id="CHEBI:15378"/>
        <dbReference type="ChEBI" id="CHEBI:24996"/>
        <dbReference type="ChEBI" id="CHEBI:85445"/>
        <dbReference type="ChEBI" id="CHEBI:141578"/>
    </reaction>
</comment>
<comment type="catalytic activity">
    <reaction evidence="1">
        <text>an N(2)-(1-hydroxy-2-oxoethyl)-guanosine in RNA + H2O = a guanosine in RNA + glycolate + H(+)</text>
        <dbReference type="Rhea" id="RHEA:57292"/>
        <dbReference type="Rhea" id="RHEA-COMP:14855"/>
        <dbReference type="Rhea" id="RHEA-COMP:14859"/>
        <dbReference type="ChEBI" id="CHEBI:15377"/>
        <dbReference type="ChEBI" id="CHEBI:15378"/>
        <dbReference type="ChEBI" id="CHEBI:29805"/>
        <dbReference type="ChEBI" id="CHEBI:74269"/>
        <dbReference type="ChEBI" id="CHEBI:141581"/>
    </reaction>
</comment>
<comment type="catalytic activity">
    <reaction evidence="1">
        <text>an N(2)-(1-hydroxy-2-oxoethyl)-2'-deoxyguanosine in DNA + H2O = a 2'-deoxyguanosine in DNA + glycolate + H(+)</text>
        <dbReference type="Rhea" id="RHEA:57296"/>
        <dbReference type="Rhea" id="RHEA-COMP:11367"/>
        <dbReference type="Rhea" id="RHEA-COMP:14857"/>
        <dbReference type="ChEBI" id="CHEBI:15377"/>
        <dbReference type="ChEBI" id="CHEBI:15378"/>
        <dbReference type="ChEBI" id="CHEBI:29805"/>
        <dbReference type="ChEBI" id="CHEBI:85445"/>
        <dbReference type="ChEBI" id="CHEBI:141579"/>
    </reaction>
</comment>
<comment type="subunit">
    <text evidence="1">Homodimer.</text>
</comment>
<comment type="subcellular location">
    <subcellularLocation>
        <location evidence="1">Cytoplasm</location>
    </subcellularLocation>
</comment>
<comment type="induction">
    <text evidence="1">By heat shock.</text>
</comment>
<comment type="similarity">
    <text evidence="1">Belongs to the peptidase C56 family. HchA subfamily.</text>
</comment>
<dbReference type="EC" id="3.1.2.-" evidence="1"/>
<dbReference type="EC" id="3.5.1.-" evidence="1"/>
<dbReference type="EC" id="3.5.1.124" evidence="1"/>
<dbReference type="EMBL" id="CP000802">
    <property type="protein sequence ID" value="ABV06370.1"/>
    <property type="molecule type" value="Genomic_DNA"/>
</dbReference>
<dbReference type="RefSeq" id="WP_000218214.1">
    <property type="nucleotide sequence ID" value="NC_009800.1"/>
</dbReference>
<dbReference type="SMR" id="A8A1G6"/>
<dbReference type="MEROPS" id="C56.006"/>
<dbReference type="GeneID" id="75205795"/>
<dbReference type="KEGG" id="ecx:EcHS_A2068"/>
<dbReference type="HOGENOM" id="CLU_066933_0_0_6"/>
<dbReference type="GO" id="GO:0005737">
    <property type="term" value="C:cytoplasm"/>
    <property type="evidence" value="ECO:0007669"/>
    <property type="project" value="UniProtKB-SubCell"/>
</dbReference>
<dbReference type="GO" id="GO:0019172">
    <property type="term" value="F:glyoxalase III activity"/>
    <property type="evidence" value="ECO:0007669"/>
    <property type="project" value="TreeGrafter"/>
</dbReference>
<dbReference type="GO" id="GO:0036524">
    <property type="term" value="F:protein deglycase activity"/>
    <property type="evidence" value="ECO:0007669"/>
    <property type="project" value="UniProtKB-UniRule"/>
</dbReference>
<dbReference type="GO" id="GO:0016790">
    <property type="term" value="F:thiolester hydrolase activity"/>
    <property type="evidence" value="ECO:0007669"/>
    <property type="project" value="UniProtKB-UniRule"/>
</dbReference>
<dbReference type="GO" id="GO:0008270">
    <property type="term" value="F:zinc ion binding"/>
    <property type="evidence" value="ECO:0007669"/>
    <property type="project" value="UniProtKB-UniRule"/>
</dbReference>
<dbReference type="GO" id="GO:0006281">
    <property type="term" value="P:DNA repair"/>
    <property type="evidence" value="ECO:0007669"/>
    <property type="project" value="UniProtKB-UniRule"/>
</dbReference>
<dbReference type="GO" id="GO:0019243">
    <property type="term" value="P:methylglyoxal catabolic process to D-lactate via S-lactoyl-glutathione"/>
    <property type="evidence" value="ECO:0007669"/>
    <property type="project" value="TreeGrafter"/>
</dbReference>
<dbReference type="GO" id="GO:0030091">
    <property type="term" value="P:protein repair"/>
    <property type="evidence" value="ECO:0007669"/>
    <property type="project" value="UniProtKB-UniRule"/>
</dbReference>
<dbReference type="FunFam" id="3.40.50.880:FF:000026">
    <property type="entry name" value="Protein/nucleic acid deglycase HchA"/>
    <property type="match status" value="1"/>
</dbReference>
<dbReference type="Gene3D" id="3.40.50.880">
    <property type="match status" value="1"/>
</dbReference>
<dbReference type="HAMAP" id="MF_01046">
    <property type="entry name" value="Deglycase_HchA"/>
    <property type="match status" value="1"/>
</dbReference>
<dbReference type="InterPro" id="IPR029062">
    <property type="entry name" value="Class_I_gatase-like"/>
</dbReference>
<dbReference type="InterPro" id="IPR017283">
    <property type="entry name" value="HchA"/>
</dbReference>
<dbReference type="InterPro" id="IPR050325">
    <property type="entry name" value="Prot/Nucl_acid_deglycase"/>
</dbReference>
<dbReference type="NCBIfam" id="NF003168">
    <property type="entry name" value="PRK04155.1"/>
    <property type="match status" value="1"/>
</dbReference>
<dbReference type="PANTHER" id="PTHR48094">
    <property type="entry name" value="PROTEIN/NUCLEIC ACID DEGLYCASE DJ-1-RELATED"/>
    <property type="match status" value="1"/>
</dbReference>
<dbReference type="PANTHER" id="PTHR48094:SF20">
    <property type="entry name" value="PROTEIN_NUCLEIC ACID DEGLYCASE 1"/>
    <property type="match status" value="1"/>
</dbReference>
<dbReference type="PIRSF" id="PIRSF037798">
    <property type="entry name" value="Chaperone_HchA"/>
    <property type="match status" value="1"/>
</dbReference>
<dbReference type="SUPFAM" id="SSF52317">
    <property type="entry name" value="Class I glutamine amidotransferase-like"/>
    <property type="match status" value="1"/>
</dbReference>
<keyword id="KW-0963">Cytoplasm</keyword>
<keyword id="KW-0227">DNA damage</keyword>
<keyword id="KW-0234">DNA repair</keyword>
<keyword id="KW-0378">Hydrolase</keyword>
<keyword id="KW-0479">Metal-binding</keyword>
<keyword id="KW-0346">Stress response</keyword>
<keyword id="KW-0862">Zinc</keyword>
<name>HCHA_ECOHS</name>
<feature type="chain" id="PRO_1000064275" description="Protein/nucleic acid deglycase HchA">
    <location>
        <begin position="1"/>
        <end position="283"/>
    </location>
</feature>
<feature type="active site" description="Nucleophile" evidence="1">
    <location>
        <position position="185"/>
    </location>
</feature>
<feature type="binding site" evidence="1">
    <location>
        <position position="86"/>
    </location>
    <ligand>
        <name>Zn(2+)</name>
        <dbReference type="ChEBI" id="CHEBI:29105"/>
    </ligand>
</feature>
<feature type="binding site" evidence="1">
    <location>
        <position position="91"/>
    </location>
    <ligand>
        <name>Zn(2+)</name>
        <dbReference type="ChEBI" id="CHEBI:29105"/>
    </ligand>
</feature>
<feature type="binding site" evidence="1">
    <location>
        <position position="123"/>
    </location>
    <ligand>
        <name>Zn(2+)</name>
        <dbReference type="ChEBI" id="CHEBI:29105"/>
    </ligand>
</feature>
<reference key="1">
    <citation type="journal article" date="2008" name="J. Bacteriol.">
        <title>The pangenome structure of Escherichia coli: comparative genomic analysis of E. coli commensal and pathogenic isolates.</title>
        <authorList>
            <person name="Rasko D.A."/>
            <person name="Rosovitz M.J."/>
            <person name="Myers G.S.A."/>
            <person name="Mongodin E.F."/>
            <person name="Fricke W.F."/>
            <person name="Gajer P."/>
            <person name="Crabtree J."/>
            <person name="Sebaihia M."/>
            <person name="Thomson N.R."/>
            <person name="Chaudhuri R."/>
            <person name="Henderson I.R."/>
            <person name="Sperandio V."/>
            <person name="Ravel J."/>
        </authorList>
    </citation>
    <scope>NUCLEOTIDE SEQUENCE [LARGE SCALE GENOMIC DNA]</scope>
    <source>
        <strain>HS</strain>
    </source>
</reference>
<organism>
    <name type="scientific">Escherichia coli O9:H4 (strain HS)</name>
    <dbReference type="NCBI Taxonomy" id="331112"/>
    <lineage>
        <taxon>Bacteria</taxon>
        <taxon>Pseudomonadati</taxon>
        <taxon>Pseudomonadota</taxon>
        <taxon>Gammaproteobacteria</taxon>
        <taxon>Enterobacterales</taxon>
        <taxon>Enterobacteriaceae</taxon>
        <taxon>Escherichia</taxon>
    </lineage>
</organism>
<accession>A8A1G6</accession>
<evidence type="ECO:0000255" key="1">
    <source>
        <dbReference type="HAMAP-Rule" id="MF_01046"/>
    </source>
</evidence>
<protein>
    <recommendedName>
        <fullName evidence="1">Protein/nucleic acid deglycase HchA</fullName>
        <ecNumber evidence="1">3.1.2.-</ecNumber>
        <ecNumber evidence="1">3.5.1.-</ecNumber>
        <ecNumber evidence="1">3.5.1.124</ecNumber>
    </recommendedName>
    <alternativeName>
        <fullName evidence="1">Maillard deglycase</fullName>
    </alternativeName>
</protein>
<sequence length="283" mass="31176">MTVQTSKNPQVDIAEDNAFFPSEYSLSQYTSPVSDLDGVDYPKPYRGKHKILVIAADERYLPTDNGKLFSTGNHPIETLLPLYHLHAAGFEFEVATISGLMTKFEYWAMPHKDEKVMPFFEQHKSLFRNPKKLADVVASLNADSEYAAIFVPGGHGALIGLPESQDVAAALQWAIKNDRFVISLCHGPAAFLALRHGDNPLNGYSICAFPDAADKQTPEIGYMPGHLTWYFGEELKKMGMNIINDDITGRVHKDRKVLTGDSPFAANALGKLAAQEMLAAYAG</sequence>
<gene>
    <name evidence="1" type="primary">hchA</name>
    <name type="ordered locus">EcHS_A2068</name>
</gene>